<protein>
    <recommendedName>
        <fullName evidence="12">Cytoadherence-linked asexual protein 3.1</fullName>
        <shortName evidence="11">CLAG3</shortName>
        <shortName evidence="11">RhopH1</shortName>
    </recommendedName>
</protein>
<accession>O77310</accession>
<accession>O77311</accession>
<reference evidence="14" key="1">
    <citation type="journal article" date="1999" name="Nature">
        <title>The complete nucleotide sequence of chromosome 3 of Plasmodium falciparum.</title>
        <authorList>
            <person name="Bowman S."/>
            <person name="Lawson D."/>
            <person name="Basham D."/>
            <person name="Brown D."/>
            <person name="Chillingworth T."/>
            <person name="Churcher C.M."/>
            <person name="Craig A."/>
            <person name="Davies R.M."/>
            <person name="Devlin K."/>
            <person name="Feltwell T."/>
            <person name="Gentles S."/>
            <person name="Gwilliam R."/>
            <person name="Hamlin N."/>
            <person name="Harris D."/>
            <person name="Holroyd S."/>
            <person name="Hornsby T."/>
            <person name="Horrocks P."/>
            <person name="Jagels K."/>
            <person name="Jassal B."/>
            <person name="Kyes S."/>
            <person name="McLean J."/>
            <person name="Moule S."/>
            <person name="Mungall K.L."/>
            <person name="Murphy L."/>
            <person name="Oliver K."/>
            <person name="Quail M.A."/>
            <person name="Rajandream M.A."/>
            <person name="Rutter S."/>
            <person name="Skelton J."/>
            <person name="Squares R."/>
            <person name="Squares S."/>
            <person name="Sulston J.E."/>
            <person name="Whitehead S."/>
            <person name="Woodward J.R."/>
            <person name="Newbold C."/>
            <person name="Barrell B.G."/>
        </authorList>
    </citation>
    <scope>NUCLEOTIDE SEQUENCE [LARGE SCALE GENOMIC DNA]</scope>
    <source>
        <strain evidence="14">3D7</strain>
    </source>
</reference>
<reference evidence="14" key="2">
    <citation type="journal article" date="2002" name="Nature">
        <title>Genome sequence of the human malaria parasite Plasmodium falciparum.</title>
        <authorList>
            <person name="Gardner M.J."/>
            <person name="Hall N."/>
            <person name="Fung E."/>
            <person name="White O."/>
            <person name="Berriman M."/>
            <person name="Hyman R.W."/>
            <person name="Carlton J.M."/>
            <person name="Pain A."/>
            <person name="Nelson K.E."/>
            <person name="Bowman S."/>
            <person name="Paulsen I.T."/>
            <person name="James K.D."/>
            <person name="Eisen J.A."/>
            <person name="Rutherford K.M."/>
            <person name="Salzberg S.L."/>
            <person name="Craig A."/>
            <person name="Kyes S."/>
            <person name="Chan M.-S."/>
            <person name="Nene V."/>
            <person name="Shallom S.J."/>
            <person name="Suh B."/>
            <person name="Peterson J."/>
            <person name="Angiuoli S."/>
            <person name="Pertea M."/>
            <person name="Allen J."/>
            <person name="Selengut J."/>
            <person name="Haft D."/>
            <person name="Mather M.W."/>
            <person name="Vaidya A.B."/>
            <person name="Martin D.M.A."/>
            <person name="Fairlamb A.H."/>
            <person name="Fraunholz M.J."/>
            <person name="Roos D.S."/>
            <person name="Ralph S.A."/>
            <person name="McFadden G.I."/>
            <person name="Cummings L.M."/>
            <person name="Subramanian G.M."/>
            <person name="Mungall C."/>
            <person name="Venter J.C."/>
            <person name="Carucci D.J."/>
            <person name="Hoffman S.L."/>
            <person name="Newbold C."/>
            <person name="Davis R.W."/>
            <person name="Fraser C.M."/>
            <person name="Barrell B.G."/>
        </authorList>
    </citation>
    <scope>NUCLEOTIDE SEQUENCE [LARGE SCALE GENOMIC DNA]</scope>
    <source>
        <strain evidence="14">3D7</strain>
    </source>
</reference>
<reference evidence="14" key="3">
    <citation type="journal article" date="2002" name="Nature">
        <title>Sequence of Plasmodium falciparum chromosomes 1, 3-9 and 13.</title>
        <authorList>
            <person name="Hall N."/>
            <person name="Pain A."/>
            <person name="Berriman M."/>
            <person name="Churcher C.M."/>
            <person name="Harris B."/>
            <person name="Harris D."/>
            <person name="Mungall K.L."/>
            <person name="Bowman S."/>
            <person name="Atkin R."/>
            <person name="Baker S."/>
            <person name="Barron A."/>
            <person name="Brooks K."/>
            <person name="Buckee C.O."/>
            <person name="Burrows C."/>
            <person name="Cherevach I."/>
            <person name="Chillingworth C."/>
            <person name="Chillingworth T."/>
            <person name="Christodoulou Z."/>
            <person name="Clark L."/>
            <person name="Clark R."/>
            <person name="Corton C."/>
            <person name="Cronin A."/>
            <person name="Davies R.M."/>
            <person name="Davis P."/>
            <person name="Dear P."/>
            <person name="Dearden F."/>
            <person name="Doggett J."/>
            <person name="Feltwell T."/>
            <person name="Goble A."/>
            <person name="Goodhead I."/>
            <person name="Gwilliam R."/>
            <person name="Hamlin N."/>
            <person name="Hance Z."/>
            <person name="Harper D."/>
            <person name="Hauser H."/>
            <person name="Hornsby T."/>
            <person name="Holroyd S."/>
            <person name="Horrocks P."/>
            <person name="Humphray S."/>
            <person name="Jagels K."/>
            <person name="James K.D."/>
            <person name="Johnson D."/>
            <person name="Kerhornou A."/>
            <person name="Knights A."/>
            <person name="Konfortov B."/>
            <person name="Kyes S."/>
            <person name="Larke N."/>
            <person name="Lawson D."/>
            <person name="Lennard N."/>
            <person name="Line A."/>
            <person name="Maddison M."/>
            <person name="Mclean J."/>
            <person name="Mooney P."/>
            <person name="Moule S."/>
            <person name="Murphy L."/>
            <person name="Oliver K."/>
            <person name="Ormond D."/>
            <person name="Price C."/>
            <person name="Quail M.A."/>
            <person name="Rabbinowitsch E."/>
            <person name="Rajandream M.A."/>
            <person name="Rutter S."/>
            <person name="Rutherford K.M."/>
            <person name="Sanders M."/>
            <person name="Simmonds M."/>
            <person name="Seeger K."/>
            <person name="Sharp S."/>
            <person name="Smith R."/>
            <person name="Squares R."/>
            <person name="Squares S."/>
            <person name="Stevens K."/>
            <person name="Taylor K."/>
            <person name="Tivey A."/>
            <person name="Unwin L."/>
            <person name="Whitehead S."/>
            <person name="Woodward J.R."/>
            <person name="Sulston J.E."/>
            <person name="Craig A."/>
            <person name="Newbold C."/>
            <person name="Barrell B.G."/>
        </authorList>
    </citation>
    <scope>NUCLEOTIDE SEQUENCE [LARGE SCALE GENOMIC DNA]</scope>
    <source>
        <strain evidence="14">3D7</strain>
    </source>
</reference>
<reference evidence="12" key="4">
    <citation type="journal article" date="2017" name="Elife">
        <title>Plasmodium falciparum parasites deploy RhopH2 into the host erythrocyte to obtain nutrients, grow and replicate.</title>
        <authorList>
            <person name="Counihan N.A."/>
            <person name="Chisholm S.A."/>
            <person name="Bullen H.E."/>
            <person name="Srivastava A."/>
            <person name="Sanders P.R."/>
            <person name="Jonsdottir T.K."/>
            <person name="Weiss G.E."/>
            <person name="Ghosh S."/>
            <person name="Crabb B.S."/>
            <person name="Creek D.J."/>
            <person name="Gilson P.R."/>
            <person name="de Koning-Ward T.F."/>
        </authorList>
    </citation>
    <scope>SUBUNIT</scope>
    <scope>SUBCELLULAR LOCATION</scope>
    <source>
        <strain evidence="9">3D7</strain>
    </source>
</reference>
<reference evidence="12" key="5">
    <citation type="journal article" date="2018" name="MBio">
        <title>CLAG3 Self-Associates in Malaria Parasites and Quantitatively Determines Nutrient Uptake Channels at the Host Membrane.</title>
        <authorList>
            <person name="Gupta A."/>
            <person name="Balabaskaran-Nina P."/>
            <person name="Nguitragool W."/>
            <person name="Saggu G.S."/>
            <person name="Schureck M.A."/>
            <person name="Desai S.A."/>
        </authorList>
    </citation>
    <scope>FUNCTION</scope>
    <scope>SUBUNIT</scope>
    <scope>SUBCELLULAR LOCATION</scope>
    <scope>DEVELOPMENTAL STAGE</scope>
    <source>
        <strain evidence="10">3D7</strain>
    </source>
</reference>
<reference evidence="12" key="6">
    <citation type="journal article" date="2020" name="MBio">
        <title>Phosphorylation of Rhoptry Protein RhopH3 Is Critical for Host Cell Invasion by the Malaria Parasite.</title>
        <authorList>
            <person name="Ekka R."/>
            <person name="Gupta A."/>
            <person name="Bhatnagar S."/>
            <person name="Malhotra P."/>
            <person name="Sharma P."/>
        </authorList>
    </citation>
    <scope>INTERACTION WITH RHOPH3</scope>
</reference>
<reference evidence="8" key="7">
    <citation type="journal article" date="2022" name="Commun. Biol.">
        <title>RhopH2 and RhopH3 export enables assembly of the RhopH complex on P. falciparum-infected erythrocyte membranes.</title>
        <authorList>
            <person name="Pasternak M."/>
            <person name="Verhoef J.M.J."/>
            <person name="Wong W."/>
            <person name="Triglia T."/>
            <person name="Mlodzianoski M.J."/>
            <person name="Geoghegan N."/>
            <person name="Evelyn C."/>
            <person name="Wardak A.Z."/>
            <person name="Rogers K."/>
            <person name="Cowman A.F."/>
        </authorList>
    </citation>
    <scope>MASS SPECTROMETRY</scope>
    <scope>IDENTIFICATION IN RHOPH COMPLEX</scope>
    <scope>SUBCELLULAR LOCATION</scope>
    <scope>DEVELOPMENTAL STAGE</scope>
    <source>
        <strain evidence="11">3D7</strain>
    </source>
</reference>
<comment type="function">
    <text evidence="6">Participates in the formation of new permeability pathways in Plasmodium-infected erythrocytes enabling the uptake of nutrients from the blood plasma.</text>
</comment>
<comment type="subunit">
    <text evidence="2 5 6 7 8">Self-associates (PubMed:29739907). Component of the RhopH complex (PubMed:28252383, PubMed:29739907, PubMed:35393572). RhopH complex is at least composed of CLAG3.1/CLAG3.2, RhopH2 and RhopH3 with a 1:1:1 subunit stoichiometry (By similarity). CLAG3.1/CLAG3.2 mediates subunit association through independent contacts with RhopH2 and RhopH3, which do not directly interact with one another (By similarity). Interacts with RhopH2 (By similarity). Interacts with RhopH3 (PubMed:33024030).</text>
</comment>
<comment type="subcellular location">
    <subcellularLocation>
        <location evidence="6 8">Host cell membrane</location>
        <topology evidence="3">Single-pass membrane protein</topology>
    </subcellularLocation>
    <subcellularLocation>
        <location evidence="6 8">Host cell membrane</location>
        <topology evidence="1">Peripheral membrane protein</topology>
        <orientation evidence="1">Cytoplasmic side</orientation>
    </subcellularLocation>
    <subcellularLocation>
        <location evidence="8">Host cytoplasm</location>
    </subcellularLocation>
    <subcellularLocation>
        <location evidence="5 6">Cytoplasmic vesicle</location>
        <location evidence="5 6">Secretory vesicle</location>
        <location evidence="5 6">Rhoptry</location>
    </subcellularLocation>
</comment>
<comment type="developmental stage">
    <text evidence="6 8">Expressed in merozoites (at protein level) (PubMed:29739907, PubMed:35393572). Expressed in ring-stage parasites (at protein level) (PubMed:35393572). Expressed in trophozoites (at protein level) (PubMed:29739907, PubMed:35393572). Expressed in developing schizonts (at protein level) (PubMed:29739907, PubMed:35393572).</text>
</comment>
<gene>
    <name evidence="11" type="primary">CLAG3.1</name>
    <name evidence="12" type="synonym">RhopH1</name>
    <name evidence="13" type="ORF">PF3D7_0302500</name>
</gene>
<organism evidence="14">
    <name type="scientific">Plasmodium falciparum (isolate 3D7)</name>
    <dbReference type="NCBI Taxonomy" id="36329"/>
    <lineage>
        <taxon>Eukaryota</taxon>
        <taxon>Sar</taxon>
        <taxon>Alveolata</taxon>
        <taxon>Apicomplexa</taxon>
        <taxon>Aconoidasida</taxon>
        <taxon>Haemosporida</taxon>
        <taxon>Plasmodiidae</taxon>
        <taxon>Plasmodium</taxon>
        <taxon>Plasmodium (Laverania)</taxon>
    </lineage>
</organism>
<name>RCH1A_PLAF7</name>
<evidence type="ECO:0000250" key="1">
    <source>
        <dbReference type="UniProtKB" id="A0A1W6IZJ5"/>
    </source>
</evidence>
<evidence type="ECO:0000250" key="2">
    <source>
        <dbReference type="UniProtKB" id="A0A2I0BTS3"/>
    </source>
</evidence>
<evidence type="ECO:0000255" key="3"/>
<evidence type="ECO:0000256" key="4">
    <source>
        <dbReference type="SAM" id="MobiDB-lite"/>
    </source>
</evidence>
<evidence type="ECO:0000269" key="5">
    <source>
    </source>
</evidence>
<evidence type="ECO:0000269" key="6">
    <source>
    </source>
</evidence>
<evidence type="ECO:0000269" key="7">
    <source>
    </source>
</evidence>
<evidence type="ECO:0000269" key="8">
    <source>
    </source>
</evidence>
<evidence type="ECO:0000303" key="9">
    <source>
    </source>
</evidence>
<evidence type="ECO:0000303" key="10">
    <source>
    </source>
</evidence>
<evidence type="ECO:0000303" key="11">
    <source>
    </source>
</evidence>
<evidence type="ECO:0000305" key="12"/>
<evidence type="ECO:0000312" key="13">
    <source>
        <dbReference type="EMBL" id="CAB10572.2"/>
    </source>
</evidence>
<evidence type="ECO:0000312" key="14">
    <source>
        <dbReference type="Proteomes" id="UP000001450"/>
    </source>
</evidence>
<keyword id="KW-0968">Cytoplasmic vesicle</keyword>
<keyword id="KW-1015">Disulfide bond</keyword>
<keyword id="KW-1032">Host cell membrane</keyword>
<keyword id="KW-1035">Host cytoplasm</keyword>
<keyword id="KW-1043">Host membrane</keyword>
<keyword id="KW-0472">Membrane</keyword>
<keyword id="KW-1185">Reference proteome</keyword>
<keyword id="KW-0732">Signal</keyword>
<keyword id="KW-0812">Transmembrane</keyword>
<keyword id="KW-1133">Transmembrane helix</keyword>
<keyword id="KW-0813">Transport</keyword>
<sequence>MVSFFKTPIFILIIFLYLNEKVICSINENQNENDTISQNVNQHENINQNVNDNDNIEQLKSMIGNDELHKNLTILEKLILESLEKDKLKYPLLKQGTEQLIDISKFNKKNITDADDETYIIPTVQSTFHDIVKYEHLIKEQSIEIYNSDISDKIKKKIFIVRTLKTIKLMLIPLNSYKQNNDLKSALEELNNVFTNKEAQEESSPIGDHGTFFRKLLTHVRTIKENEDIENKGETLILGDNKIDVMNSNDFFFTTNSNVKFMENLDDITNQYGLGLINHLGPHLIALGHFTVLKLALKNYKNYFEAKSIKFFSWQKILEFSMSDRFKVLDMMCDHESVYYSEKKRRKTYLKVDRSNTSMECNILEYLLHYFNKYQLEIIKTTQDTDFDLHGMMEHKYIKDYFFSFMCNDPKECIIYHTNQFKKEANEENTFPEQEEPNRQISAFNLYLNYYYFMKRYSSYGVKKTLYVHLLNLTGLLNYDTRAYVTSLYLPGYYNAVEMSFTEEKEFSKLFESLIQCIEKCHSDQARQISKDSNLLNNITKCDLCKGAFLYANMKFDEVPSMLQKFYVYLTKGLKIQKVSSLIKTLDIYQDYSNYLSHDINWYTFLFLFRLTSFKEIAKKNVAEAMYLNIKDEDTFNKTVVTNYWYPSPIKKYYTLYVRKHIPNNLVDELEKLMKSGTLEKMKKSLTFLVHVNSFLQLDFFHQLNEPPLGLPRSYPLSLVLEHKFKEWMNSSPAGFYFSNYQNPYIRKDLHDKVLSQKFEPPKMNQWNKVLKSLIECAYDMYFEQRHVKNLYKYHNIYNINNKLMLMRDSIDLYKNNFDDVLFFADIFNMRKYMTATPVYKKVKDRVYHTLHSITGNSVNFYKYGIIYGFKVNKEILKEVVDELYSIYNFNTDIFTDTSFLQTVYLLFRRIEETYRTQRRDDKISVNNVFFMNVANNYSKLNKEEREIEIHNSMASRYYAKTMFAAFQMLFSTMLSNNVDNLDKAYGLSENIQVATSTSAFLTFAYVYNGSIMDSVTNSLLPPYAKKPITQLKYGKTFVFSNYFMLASKMYDMLNYKNLSLLCEYQAVASANFYSAKKVGQFLGRKFLPITTYFLVMRISWTHAFTTGQHLISAFGSPSSTANGKSNASGYKSPESFFFTHGLAAEASKYLFFYFFTNLYLDAYKSFPGGFGPAIKEQTQHVQEQTYERKPSVHSFNRNFFMELVNGFMYAFCFFAISQMYAYFENINFYITSNFRFLDRYYGVFNKYFINYAIIKLKEITSDLLIKYEREAYLSMKKYGYLGEVIAARLSPKDKIMNYVHETNEDIMSNLRRYDMENAFKNKMSTYVDDFAFFDDCGKNEQFLNERCDYCPVIEEVEETQLFTTTGDKNTNKTTEIKKQTSTYIDTEKMNEADSADSDDEKDSDTPDDELMISRFH</sequence>
<proteinExistence type="evidence at protein level"/>
<feature type="signal peptide" evidence="3">
    <location>
        <begin position="1"/>
        <end position="24"/>
    </location>
</feature>
<feature type="chain" id="PRO_5004160049" description="Cytoadherence-linked asexual protein 3.1" evidence="3">
    <location>
        <begin position="25"/>
        <end position="1417"/>
    </location>
</feature>
<feature type="transmembrane region" description="Helical" evidence="3">
    <location>
        <begin position="1204"/>
        <end position="1224"/>
    </location>
</feature>
<feature type="region of interest" description="Disordered" evidence="4">
    <location>
        <begin position="1383"/>
        <end position="1417"/>
    </location>
</feature>
<feature type="compositionally biased region" description="Acidic residues" evidence="4">
    <location>
        <begin position="1394"/>
        <end position="1411"/>
    </location>
</feature>
<feature type="disulfide bond" evidence="2">
    <location>
        <begin position="333"/>
        <end position="361"/>
    </location>
</feature>
<feature type="disulfide bond" evidence="2">
    <location>
        <begin position="407"/>
        <end position="413"/>
    </location>
</feature>
<feature type="disulfide bond" evidence="2">
    <location>
        <begin position="517"/>
        <end position="545"/>
    </location>
</feature>
<feature type="disulfide bond" evidence="2">
    <location>
        <begin position="521"/>
        <end position="542"/>
    </location>
</feature>
<dbReference type="EMBL" id="AL844502">
    <property type="protein sequence ID" value="CAB10572.2"/>
    <property type="molecule type" value="Genomic_DNA"/>
</dbReference>
<dbReference type="PIR" id="T18418">
    <property type="entry name" value="T18418"/>
</dbReference>
<dbReference type="RefSeq" id="XP_001351100.1">
    <property type="nucleotide sequence ID" value="XM_001351064.1"/>
</dbReference>
<dbReference type="SMR" id="O77310"/>
<dbReference type="FunCoup" id="O77310">
    <property type="interactions" value="3"/>
</dbReference>
<dbReference type="IntAct" id="O77310">
    <property type="interactions" value="11"/>
</dbReference>
<dbReference type="STRING" id="5833.PFC0120w"/>
<dbReference type="SwissPalm" id="O77310"/>
<dbReference type="PaxDb" id="5833-PFC0120w"/>
<dbReference type="EnsemblProtists" id="CAB10572">
    <property type="protein sequence ID" value="CAB10572"/>
    <property type="gene ID" value="PF3D7_0302500"/>
</dbReference>
<dbReference type="GeneID" id="814342"/>
<dbReference type="KEGG" id="pfa:PF3D7_0302500"/>
<dbReference type="VEuPathDB" id="PlasmoDB:PF3D7_0302500"/>
<dbReference type="HOGENOM" id="CLU_253389_0_0_1"/>
<dbReference type="InParanoid" id="O77310"/>
<dbReference type="OMA" id="KNKMSTY"/>
<dbReference type="OrthoDB" id="375272at2759"/>
<dbReference type="PhylomeDB" id="O77310"/>
<dbReference type="Proteomes" id="UP000001450">
    <property type="component" value="Chromosome 3"/>
</dbReference>
<dbReference type="GO" id="GO:0031410">
    <property type="term" value="C:cytoplasmic vesicle"/>
    <property type="evidence" value="ECO:0007669"/>
    <property type="project" value="UniProtKB-KW"/>
</dbReference>
<dbReference type="GO" id="GO:0030430">
    <property type="term" value="C:host cell cytoplasm"/>
    <property type="evidence" value="ECO:0007669"/>
    <property type="project" value="UniProtKB-SubCell"/>
</dbReference>
<dbReference type="GO" id="GO:0020002">
    <property type="term" value="C:host cell plasma membrane"/>
    <property type="evidence" value="ECO:0000304"/>
    <property type="project" value="GeneDB"/>
</dbReference>
<dbReference type="GO" id="GO:0016020">
    <property type="term" value="C:membrane"/>
    <property type="evidence" value="ECO:0007669"/>
    <property type="project" value="UniProtKB-KW"/>
</dbReference>
<dbReference type="GO" id="GO:0020008">
    <property type="term" value="C:rhoptry"/>
    <property type="evidence" value="ECO:0000314"/>
    <property type="project" value="GeneDB"/>
</dbReference>
<dbReference type="GO" id="GO:0050839">
    <property type="term" value="F:cell adhesion molecule binding"/>
    <property type="evidence" value="ECO:0000304"/>
    <property type="project" value="GeneDB"/>
</dbReference>
<dbReference type="GO" id="GO:0020035">
    <property type="term" value="P:adhesion of symbiont to microvasculature"/>
    <property type="evidence" value="ECO:0000304"/>
    <property type="project" value="GeneDB"/>
</dbReference>
<dbReference type="InterPro" id="IPR005553">
    <property type="entry name" value="CLAG"/>
</dbReference>
<dbReference type="PANTHER" id="PTHR31802">
    <property type="entry name" value="32 KDA HEAT SHOCK PROTEIN-RELATED"/>
    <property type="match status" value="1"/>
</dbReference>
<dbReference type="PANTHER" id="PTHR31802:SF39">
    <property type="entry name" value="CHROMOSOME UNDETERMINED SCAFFOLD_55, WHOLE GENOME SHOTGUN SEQUENCE"/>
    <property type="match status" value="1"/>
</dbReference>
<dbReference type="Pfam" id="PF03805">
    <property type="entry name" value="CLAG"/>
    <property type="match status" value="1"/>
</dbReference>